<evidence type="ECO:0000255" key="1">
    <source>
        <dbReference type="HAMAP-Rule" id="MF_01326"/>
    </source>
</evidence>
<evidence type="ECO:0000305" key="2"/>
<name>RL24_ENDTX</name>
<accession>B1GZ94</accession>
<keyword id="KW-0687">Ribonucleoprotein</keyword>
<keyword id="KW-0689">Ribosomal protein</keyword>
<keyword id="KW-0694">RNA-binding</keyword>
<keyword id="KW-0699">rRNA-binding</keyword>
<comment type="function">
    <text evidence="1">One of two assembly initiator proteins, it binds directly to the 5'-end of the 23S rRNA, where it nucleates assembly of the 50S subunit.</text>
</comment>
<comment type="function">
    <text evidence="1">One of the proteins that surrounds the polypeptide exit tunnel on the outside of the subunit.</text>
</comment>
<comment type="subunit">
    <text evidence="1">Part of the 50S ribosomal subunit.</text>
</comment>
<comment type="similarity">
    <text evidence="1">Belongs to the universal ribosomal protein uL24 family.</text>
</comment>
<reference key="1">
    <citation type="journal article" date="2008" name="Proc. Natl. Acad. Sci. U.S.A.">
        <title>Complete genome of the uncultured termite group 1 bacteria in a single host protist cell.</title>
        <authorList>
            <person name="Hongoh Y."/>
            <person name="Sharma V.K."/>
            <person name="Prakash T."/>
            <person name="Noda S."/>
            <person name="Taylor T.D."/>
            <person name="Kudo T."/>
            <person name="Sakaki Y."/>
            <person name="Toyoda A."/>
            <person name="Hattori M."/>
            <person name="Ohkuma M."/>
        </authorList>
    </citation>
    <scope>NUCLEOTIDE SEQUENCE [LARGE SCALE GENOMIC DNA]</scope>
</reference>
<proteinExistence type="inferred from homology"/>
<gene>
    <name evidence="1" type="primary">rplX</name>
    <name type="ordered locus">TGRD_093</name>
</gene>
<dbReference type="EMBL" id="AP009510">
    <property type="protein sequence ID" value="BAG13576.1"/>
    <property type="molecule type" value="Genomic_DNA"/>
</dbReference>
<dbReference type="RefSeq" id="WP_015423105.1">
    <property type="nucleotide sequence ID" value="NC_020419.1"/>
</dbReference>
<dbReference type="SMR" id="B1GZ94"/>
<dbReference type="STRING" id="471821.TGRD_093"/>
<dbReference type="KEGG" id="rsd:TGRD_093"/>
<dbReference type="PATRIC" id="fig|471821.5.peg.137"/>
<dbReference type="HOGENOM" id="CLU_093315_2_3_0"/>
<dbReference type="Proteomes" id="UP000001691">
    <property type="component" value="Chromosome"/>
</dbReference>
<dbReference type="GO" id="GO:1990904">
    <property type="term" value="C:ribonucleoprotein complex"/>
    <property type="evidence" value="ECO:0007669"/>
    <property type="project" value="UniProtKB-KW"/>
</dbReference>
<dbReference type="GO" id="GO:0005840">
    <property type="term" value="C:ribosome"/>
    <property type="evidence" value="ECO:0007669"/>
    <property type="project" value="UniProtKB-KW"/>
</dbReference>
<dbReference type="GO" id="GO:0019843">
    <property type="term" value="F:rRNA binding"/>
    <property type="evidence" value="ECO:0007669"/>
    <property type="project" value="UniProtKB-UniRule"/>
</dbReference>
<dbReference type="GO" id="GO:0003735">
    <property type="term" value="F:structural constituent of ribosome"/>
    <property type="evidence" value="ECO:0007669"/>
    <property type="project" value="InterPro"/>
</dbReference>
<dbReference type="GO" id="GO:0006412">
    <property type="term" value="P:translation"/>
    <property type="evidence" value="ECO:0007669"/>
    <property type="project" value="UniProtKB-UniRule"/>
</dbReference>
<dbReference type="CDD" id="cd06089">
    <property type="entry name" value="KOW_RPL26"/>
    <property type="match status" value="1"/>
</dbReference>
<dbReference type="Gene3D" id="2.30.30.30">
    <property type="match status" value="1"/>
</dbReference>
<dbReference type="HAMAP" id="MF_01326_B">
    <property type="entry name" value="Ribosomal_uL24_B"/>
    <property type="match status" value="1"/>
</dbReference>
<dbReference type="InterPro" id="IPR005824">
    <property type="entry name" value="KOW"/>
</dbReference>
<dbReference type="InterPro" id="IPR014722">
    <property type="entry name" value="Rib_uL2_dom2"/>
</dbReference>
<dbReference type="InterPro" id="IPR003256">
    <property type="entry name" value="Ribosomal_uL24"/>
</dbReference>
<dbReference type="InterPro" id="IPR041988">
    <property type="entry name" value="Ribosomal_uL24_KOW"/>
</dbReference>
<dbReference type="InterPro" id="IPR008991">
    <property type="entry name" value="Translation_prot_SH3-like_sf"/>
</dbReference>
<dbReference type="NCBIfam" id="TIGR01079">
    <property type="entry name" value="rplX_bact"/>
    <property type="match status" value="1"/>
</dbReference>
<dbReference type="PANTHER" id="PTHR12903">
    <property type="entry name" value="MITOCHONDRIAL RIBOSOMAL PROTEIN L24"/>
    <property type="match status" value="1"/>
</dbReference>
<dbReference type="Pfam" id="PF00467">
    <property type="entry name" value="KOW"/>
    <property type="match status" value="1"/>
</dbReference>
<dbReference type="Pfam" id="PF17136">
    <property type="entry name" value="ribosomal_L24"/>
    <property type="match status" value="1"/>
</dbReference>
<dbReference type="SMART" id="SM00739">
    <property type="entry name" value="KOW"/>
    <property type="match status" value="1"/>
</dbReference>
<dbReference type="SUPFAM" id="SSF50104">
    <property type="entry name" value="Translation proteins SH3-like domain"/>
    <property type="match status" value="1"/>
</dbReference>
<protein>
    <recommendedName>
        <fullName evidence="1">Large ribosomal subunit protein uL24</fullName>
    </recommendedName>
    <alternativeName>
        <fullName evidence="2">50S ribosomal protein L24</fullName>
    </alternativeName>
</protein>
<feature type="chain" id="PRO_0000355729" description="Large ribosomal subunit protein uL24">
    <location>
        <begin position="1"/>
        <end position="103"/>
    </location>
</feature>
<sequence length="103" mass="11480">MLNIKKKDKVLILSGKDRGKKGEVIYVSPDKGKVIVTKINVVKRHTNPTRKDLGGIHKKEAPIAISKIMLICPKCSRGSRAKFDKLSDGKKIRVCRRCGEVIV</sequence>
<organism>
    <name type="scientific">Endomicrobium trichonymphae</name>
    <dbReference type="NCBI Taxonomy" id="1408204"/>
    <lineage>
        <taxon>Bacteria</taxon>
        <taxon>Pseudomonadati</taxon>
        <taxon>Elusimicrobiota</taxon>
        <taxon>Endomicrobiia</taxon>
        <taxon>Endomicrobiales</taxon>
        <taxon>Endomicrobiaceae</taxon>
        <taxon>Candidatus Endomicrobiellum</taxon>
    </lineage>
</organism>